<proteinExistence type="predicted"/>
<organism>
    <name type="scientific">Acanthamoeba polyphaga mimivirus</name>
    <name type="common">APMV</name>
    <dbReference type="NCBI Taxonomy" id="212035"/>
    <lineage>
        <taxon>Viruses</taxon>
        <taxon>Varidnaviria</taxon>
        <taxon>Bamfordvirae</taxon>
        <taxon>Nucleocytoviricota</taxon>
        <taxon>Megaviricetes</taxon>
        <taxon>Imitervirales</taxon>
        <taxon>Mimiviridae</taxon>
        <taxon>Megamimivirinae</taxon>
        <taxon>Mimivirus</taxon>
        <taxon>Mimivirus bradfordmassiliense</taxon>
    </lineage>
</organism>
<accession>Q5UPS1</accession>
<reference key="1">
    <citation type="journal article" date="2004" name="Science">
        <title>The 1.2-megabase genome sequence of Mimivirus.</title>
        <authorList>
            <person name="Raoult D."/>
            <person name="Audic S."/>
            <person name="Robert C."/>
            <person name="Abergel C."/>
            <person name="Renesto P."/>
            <person name="Ogata H."/>
            <person name="La Scola B."/>
            <person name="Susan M."/>
            <person name="Claverie J.-M."/>
        </authorList>
    </citation>
    <scope>NUCLEOTIDE SEQUENCE [LARGE SCALE GENOMIC DNA]</scope>
    <source>
        <strain>Rowbotham-Bradford</strain>
    </source>
</reference>
<keyword id="KW-0040">ANK repeat</keyword>
<keyword id="KW-1185">Reference proteome</keyword>
<keyword id="KW-0677">Repeat</keyword>
<sequence>MINWLHLPDEIWLLIGNFISDREICCLAFVNTRFLNLLSYNKINQNLVLECAIEVDNIYIINKLIDKTDVNGLKFVMRWSALHGSFQIIKSIIRKDHNNDLLDLHAINWSIESNHLHISKYLIDKYNIVIIPESAFIYGRLDIIDWMFSRQNQNNANKKSTIKKTVDFLKSKFISHDYFYDSMIELACLYGHVHVVQYFIDNQCSVRQKWLYYSCLSGNFDLVKLLCKNGCRIFSNRRLINTAITGGNLDIVRYCLLHSKIDLAQNNFAMKIAIKTGHIGIVRLLVSHGSDIHFDNGECMIIASRGGFANIVKFFLENKVYMSEKVLKIAAIRGYLDIIKVFIKYASACMSNINSVCKSNGSMVVDNHINYIVNITRNFNMRKILIWSLINNRINIVTYLLEIFPKLREILNQIMYQHPEISEKIDLDSLYKN</sequence>
<feature type="chain" id="PRO_0000067199" description="Putative ankyrin repeat protein R784">
    <location>
        <begin position="1"/>
        <end position="433"/>
    </location>
</feature>
<feature type="repeat" description="ANK 1">
    <location>
        <begin position="44"/>
        <end position="70"/>
    </location>
</feature>
<feature type="repeat" description="ANK 2">
    <location>
        <begin position="71"/>
        <end position="101"/>
    </location>
</feature>
<feature type="repeat" description="ANK 3">
    <location>
        <begin position="102"/>
        <end position="131"/>
    </location>
</feature>
<feature type="repeat" description="ANK 4">
    <location>
        <begin position="179"/>
        <end position="205"/>
    </location>
</feature>
<feature type="repeat" description="ANK 5">
    <location>
        <begin position="206"/>
        <end position="235"/>
    </location>
</feature>
<feature type="repeat" description="ANK 6">
    <location>
        <begin position="237"/>
        <end position="264"/>
    </location>
</feature>
<feature type="repeat" description="ANK 7">
    <location>
        <begin position="265"/>
        <end position="294"/>
    </location>
</feature>
<feature type="repeat" description="ANK 8">
    <location>
        <begin position="296"/>
        <end position="321"/>
    </location>
</feature>
<feature type="repeat" description="ANK 9">
    <location>
        <begin position="322"/>
        <end position="351"/>
    </location>
</feature>
<feature type="repeat" description="ANK 10">
    <location>
        <begin position="380"/>
        <end position="409"/>
    </location>
</feature>
<gene>
    <name type="ordered locus">MIMI_R784</name>
</gene>
<name>YR784_MIMIV</name>
<dbReference type="EMBL" id="AY653733">
    <property type="protein sequence ID" value="AAV51044.1"/>
    <property type="molecule type" value="Genomic_DNA"/>
</dbReference>
<dbReference type="SMR" id="Q5UPS1"/>
<dbReference type="KEGG" id="vg:9925445"/>
<dbReference type="OrthoDB" id="1268at10501"/>
<dbReference type="Proteomes" id="UP000001134">
    <property type="component" value="Genome"/>
</dbReference>
<dbReference type="CDD" id="cd09917">
    <property type="entry name" value="F-box_SF"/>
    <property type="match status" value="1"/>
</dbReference>
<dbReference type="Gene3D" id="1.25.40.20">
    <property type="entry name" value="Ankyrin repeat-containing domain"/>
    <property type="match status" value="2"/>
</dbReference>
<dbReference type="InterPro" id="IPR002110">
    <property type="entry name" value="Ankyrin_rpt"/>
</dbReference>
<dbReference type="InterPro" id="IPR036770">
    <property type="entry name" value="Ankyrin_rpt-contain_sf"/>
</dbReference>
<dbReference type="InterPro" id="IPR036047">
    <property type="entry name" value="F-box-like_dom_sf"/>
</dbReference>
<dbReference type="InterPro" id="IPR052050">
    <property type="entry name" value="SecEffector_AnkRepeat"/>
</dbReference>
<dbReference type="PANTHER" id="PTHR46586">
    <property type="entry name" value="ANKYRIN REPEAT-CONTAINING PROTEIN"/>
    <property type="match status" value="1"/>
</dbReference>
<dbReference type="PANTHER" id="PTHR46586:SF3">
    <property type="entry name" value="ANKYRIN REPEAT-CONTAINING PROTEIN"/>
    <property type="match status" value="1"/>
</dbReference>
<dbReference type="Pfam" id="PF12796">
    <property type="entry name" value="Ank_2"/>
    <property type="match status" value="1"/>
</dbReference>
<dbReference type="SMART" id="SM00248">
    <property type="entry name" value="ANK"/>
    <property type="match status" value="7"/>
</dbReference>
<dbReference type="SUPFAM" id="SSF48403">
    <property type="entry name" value="Ankyrin repeat"/>
    <property type="match status" value="2"/>
</dbReference>
<dbReference type="SUPFAM" id="SSF81383">
    <property type="entry name" value="F-box domain"/>
    <property type="match status" value="1"/>
</dbReference>
<dbReference type="PROSITE" id="PS50297">
    <property type="entry name" value="ANK_REP_REGION"/>
    <property type="match status" value="1"/>
</dbReference>
<dbReference type="PROSITE" id="PS50088">
    <property type="entry name" value="ANK_REPEAT"/>
    <property type="match status" value="1"/>
</dbReference>
<protein>
    <recommendedName>
        <fullName>Putative ankyrin repeat protein R784</fullName>
    </recommendedName>
</protein>
<organismHost>
    <name type="scientific">Acanthamoeba polyphaga</name>
    <name type="common">Amoeba</name>
    <dbReference type="NCBI Taxonomy" id="5757"/>
</organismHost>